<accession>P9WP27</accession>
<accession>L0T817</accession>
<accession>O07727</accession>
<accession>Q7D7T4</accession>
<protein>
    <recommendedName>
        <fullName evidence="6">D-amino-acid oxidase</fullName>
        <shortName>DAAO</shortName>
        <shortName>DAMOX</shortName>
        <shortName>DAO</shortName>
        <ecNumber evidence="5">1.4.3.3</ecNumber>
    </recommendedName>
</protein>
<proteinExistence type="evidence at protein level"/>
<keyword id="KW-0134">Cell wall</keyword>
<keyword id="KW-0963">Cytoplasm</keyword>
<keyword id="KW-0274">FAD</keyword>
<keyword id="KW-0285">Flavoprotein</keyword>
<keyword id="KW-0560">Oxidoreductase</keyword>
<keyword id="KW-1185">Reference proteome</keyword>
<keyword id="KW-0964">Secreted</keyword>
<reference key="1">
    <citation type="journal article" date="1998" name="Nature">
        <title>Deciphering the biology of Mycobacterium tuberculosis from the complete genome sequence.</title>
        <authorList>
            <person name="Cole S.T."/>
            <person name="Brosch R."/>
            <person name="Parkhill J."/>
            <person name="Garnier T."/>
            <person name="Churcher C.M."/>
            <person name="Harris D.E."/>
            <person name="Gordon S.V."/>
            <person name="Eiglmeier K."/>
            <person name="Gas S."/>
            <person name="Barry C.E. III"/>
            <person name="Tekaia F."/>
            <person name="Badcock K."/>
            <person name="Basham D."/>
            <person name="Brown D."/>
            <person name="Chillingworth T."/>
            <person name="Connor R."/>
            <person name="Davies R.M."/>
            <person name="Devlin K."/>
            <person name="Feltwell T."/>
            <person name="Gentles S."/>
            <person name="Hamlin N."/>
            <person name="Holroyd S."/>
            <person name="Hornsby T."/>
            <person name="Jagels K."/>
            <person name="Krogh A."/>
            <person name="McLean J."/>
            <person name="Moule S."/>
            <person name="Murphy L.D."/>
            <person name="Oliver S."/>
            <person name="Osborne J."/>
            <person name="Quail M.A."/>
            <person name="Rajandream M.A."/>
            <person name="Rogers J."/>
            <person name="Rutter S."/>
            <person name="Seeger K."/>
            <person name="Skelton S."/>
            <person name="Squares S."/>
            <person name="Squares R."/>
            <person name="Sulston J.E."/>
            <person name="Taylor K."/>
            <person name="Whitehead S."/>
            <person name="Barrell B.G."/>
        </authorList>
    </citation>
    <scope>NUCLEOTIDE SEQUENCE [LARGE SCALE GENOMIC DNA]</scope>
    <source>
        <strain>ATCC 25618 / H37Rv</strain>
    </source>
</reference>
<reference key="2">
    <citation type="journal article" date="2008" name="BMC Syst. Biol.">
        <title>targetTB: a target identification pipeline for Mycobacterium tuberculosis through an interactome, reactome and genome-scale structural analysis.</title>
        <authorList>
            <person name="Raman K."/>
            <person name="Yeturu K."/>
            <person name="Chandra N."/>
        </authorList>
    </citation>
    <scope>IDENTIFICATION AS A DRUG TARGET [LARGE SCALE ANALYSIS]</scope>
</reference>
<reference key="3">
    <citation type="journal article" date="2011" name="Mol. Cell. Proteomics">
        <title>Proteogenomic analysis of Mycobacterium tuberculosis by high resolution mass spectrometry.</title>
        <authorList>
            <person name="Kelkar D.S."/>
            <person name="Kumar D."/>
            <person name="Kumar P."/>
            <person name="Balakrishnan L."/>
            <person name="Muthusamy B."/>
            <person name="Yadav A.K."/>
            <person name="Shrivastava P."/>
            <person name="Marimuthu A."/>
            <person name="Anand S."/>
            <person name="Sundaram H."/>
            <person name="Kingsbury R."/>
            <person name="Harsha H.C."/>
            <person name="Nair B."/>
            <person name="Prasad T.S."/>
            <person name="Chauhan D.S."/>
            <person name="Katoch K."/>
            <person name="Katoch V.M."/>
            <person name="Kumar P."/>
            <person name="Chaerkady R."/>
            <person name="Ramachandran S."/>
            <person name="Dash D."/>
            <person name="Pandey A."/>
        </authorList>
    </citation>
    <scope>IDENTIFICATION BY MASS SPECTROMETRY [LARGE SCALE ANALYSIS]</scope>
    <source>
        <strain>ATCC 25618 / H37Rv</strain>
    </source>
</reference>
<name>DAO_MYCTU</name>
<organism>
    <name type="scientific">Mycobacterium tuberculosis (strain ATCC 25618 / H37Rv)</name>
    <dbReference type="NCBI Taxonomy" id="83332"/>
    <lineage>
        <taxon>Bacteria</taxon>
        <taxon>Bacillati</taxon>
        <taxon>Actinomycetota</taxon>
        <taxon>Actinomycetes</taxon>
        <taxon>Mycobacteriales</taxon>
        <taxon>Mycobacteriaceae</taxon>
        <taxon>Mycobacterium</taxon>
        <taxon>Mycobacterium tuberculosis complex</taxon>
    </lineage>
</organism>
<comment type="function">
    <text evidence="1 5">Catalyzes the oxidative deamination of D-amino acids with broad substrate specificity (By similarity). Enables the organism to utilize D-amino acids as a source of nutrients (By similarity).</text>
</comment>
<comment type="catalytic activity">
    <reaction evidence="5">
        <text>a D-alpha-amino acid + O2 + H2O = a 2-oxocarboxylate + H2O2 + NH4(+)</text>
        <dbReference type="Rhea" id="RHEA:21816"/>
        <dbReference type="ChEBI" id="CHEBI:15377"/>
        <dbReference type="ChEBI" id="CHEBI:15379"/>
        <dbReference type="ChEBI" id="CHEBI:16240"/>
        <dbReference type="ChEBI" id="CHEBI:28938"/>
        <dbReference type="ChEBI" id="CHEBI:35179"/>
        <dbReference type="ChEBI" id="CHEBI:59871"/>
        <dbReference type="EC" id="1.4.3.3"/>
    </reaction>
    <physiologicalReaction direction="left-to-right" evidence="5">
        <dbReference type="Rhea" id="RHEA:21817"/>
    </physiologicalReaction>
</comment>
<comment type="cofactor">
    <cofactor evidence="5">
        <name>FAD</name>
        <dbReference type="ChEBI" id="CHEBI:57692"/>
    </cofactor>
</comment>
<comment type="subcellular location">
    <subcellularLocation>
        <location evidence="1">Cytoplasm</location>
    </subcellularLocation>
    <subcellularLocation>
        <location evidence="1">Secreted</location>
        <location evidence="1">Cell wall</location>
    </subcellularLocation>
</comment>
<comment type="miscellaneous">
    <text>Was identified as a high-confidence drug target.</text>
</comment>
<comment type="similarity">
    <text evidence="6">Belongs to the DAMOX/DASOX family.</text>
</comment>
<feature type="chain" id="PRO_0000390617" description="D-amino-acid oxidase">
    <location>
        <begin position="1"/>
        <end position="320"/>
    </location>
</feature>
<feature type="binding site" evidence="3">
    <location>
        <position position="13"/>
    </location>
    <ligand>
        <name>FAD</name>
        <dbReference type="ChEBI" id="CHEBI:57692"/>
    </ligand>
</feature>
<feature type="binding site" evidence="3">
    <location>
        <position position="14"/>
    </location>
    <ligand>
        <name>FAD</name>
        <dbReference type="ChEBI" id="CHEBI:57692"/>
    </ligand>
</feature>
<feature type="binding site" evidence="3">
    <location>
        <position position="15"/>
    </location>
    <ligand>
        <name>FAD</name>
        <dbReference type="ChEBI" id="CHEBI:57692"/>
    </ligand>
</feature>
<feature type="binding site" evidence="3">
    <location>
        <position position="42"/>
    </location>
    <ligand>
        <name>FAD</name>
        <dbReference type="ChEBI" id="CHEBI:57692"/>
    </ligand>
</feature>
<feature type="binding site" evidence="3">
    <location>
        <position position="43"/>
    </location>
    <ligand>
        <name>FAD</name>
        <dbReference type="ChEBI" id="CHEBI:57692"/>
    </ligand>
</feature>
<feature type="binding site" evidence="3">
    <location>
        <position position="44"/>
    </location>
    <ligand>
        <name>FAD</name>
        <dbReference type="ChEBI" id="CHEBI:57692"/>
    </ligand>
</feature>
<feature type="binding site" evidence="4">
    <location>
        <position position="48"/>
    </location>
    <ligand>
        <name>FAD</name>
        <dbReference type="ChEBI" id="CHEBI:57692"/>
    </ligand>
</feature>
<feature type="binding site" evidence="3">
    <location>
        <position position="49"/>
    </location>
    <ligand>
        <name>FAD</name>
        <dbReference type="ChEBI" id="CHEBI:57692"/>
    </ligand>
</feature>
<feature type="binding site" evidence="2">
    <location>
        <position position="220"/>
    </location>
    <ligand>
        <name>D-proline</name>
        <dbReference type="ChEBI" id="CHEBI:57726"/>
    </ligand>
</feature>
<feature type="binding site" evidence="3">
    <location>
        <position position="220"/>
    </location>
    <ligand>
        <name>D-serine</name>
        <dbReference type="ChEBI" id="CHEBI:35247"/>
    </ligand>
</feature>
<feature type="binding site" evidence="2">
    <location>
        <position position="274"/>
    </location>
    <ligand>
        <name>D-proline</name>
        <dbReference type="ChEBI" id="CHEBI:57726"/>
    </ligand>
</feature>
<feature type="binding site" evidence="3">
    <location>
        <position position="274"/>
    </location>
    <ligand>
        <name>D-serine</name>
        <dbReference type="ChEBI" id="CHEBI:35247"/>
    </ligand>
</feature>
<feature type="binding site" evidence="4">
    <location>
        <position position="274"/>
    </location>
    <ligand>
        <name>FAD</name>
        <dbReference type="ChEBI" id="CHEBI:57692"/>
    </ligand>
</feature>
<feature type="binding site" evidence="3">
    <location>
        <position position="299"/>
    </location>
    <ligand>
        <name>FAD</name>
        <dbReference type="ChEBI" id="CHEBI:57692"/>
    </ligand>
</feature>
<feature type="binding site" evidence="2">
    <location>
        <position position="300"/>
    </location>
    <ligand>
        <name>D-proline</name>
        <dbReference type="ChEBI" id="CHEBI:57726"/>
    </ligand>
</feature>
<feature type="binding site" evidence="3">
    <location>
        <position position="300"/>
    </location>
    <ligand>
        <name>D-serine</name>
        <dbReference type="ChEBI" id="CHEBI:35247"/>
    </ligand>
</feature>
<feature type="binding site" evidence="3">
    <location>
        <position position="300"/>
    </location>
    <ligand>
        <name>FAD</name>
        <dbReference type="ChEBI" id="CHEBI:57692"/>
    </ligand>
</feature>
<feature type="binding site" evidence="4">
    <location>
        <position position="302"/>
    </location>
    <ligand>
        <name>FAD</name>
        <dbReference type="ChEBI" id="CHEBI:57692"/>
    </ligand>
</feature>
<feature type="binding site" evidence="3">
    <location>
        <position position="304"/>
    </location>
    <ligand>
        <name>FAD</name>
        <dbReference type="ChEBI" id="CHEBI:57692"/>
    </ligand>
</feature>
<dbReference type="EC" id="1.4.3.3" evidence="5"/>
<dbReference type="EMBL" id="AL123456">
    <property type="protein sequence ID" value="CCP44672.1"/>
    <property type="molecule type" value="Genomic_DNA"/>
</dbReference>
<dbReference type="PIR" id="F70518">
    <property type="entry name" value="F70518"/>
</dbReference>
<dbReference type="RefSeq" id="WP_003899072.1">
    <property type="nucleotide sequence ID" value="NZ_NVQJ01000034.1"/>
</dbReference>
<dbReference type="SMR" id="P9WP27"/>
<dbReference type="FunCoup" id="P9WP27">
    <property type="interactions" value="130"/>
</dbReference>
<dbReference type="STRING" id="83332.Rv1905c"/>
<dbReference type="PaxDb" id="83332-Rv1905c"/>
<dbReference type="DNASU" id="885504"/>
<dbReference type="KEGG" id="mtu:Rv1905c"/>
<dbReference type="KEGG" id="mtv:RVBD_1905c"/>
<dbReference type="PATRIC" id="fig|83332.111.peg.2119"/>
<dbReference type="TubercuList" id="Rv1905c"/>
<dbReference type="eggNOG" id="COG0665">
    <property type="taxonomic scope" value="Bacteria"/>
</dbReference>
<dbReference type="InParanoid" id="P9WP27"/>
<dbReference type="OrthoDB" id="246701at2"/>
<dbReference type="PhylomeDB" id="P9WP27"/>
<dbReference type="Proteomes" id="UP000001584">
    <property type="component" value="Chromosome"/>
</dbReference>
<dbReference type="GO" id="GO:0005737">
    <property type="term" value="C:cytoplasm"/>
    <property type="evidence" value="ECO:0000250"/>
    <property type="project" value="UniProtKB"/>
</dbReference>
<dbReference type="GO" id="GO:0005576">
    <property type="term" value="C:extracellular region"/>
    <property type="evidence" value="ECO:0007669"/>
    <property type="project" value="UniProtKB-KW"/>
</dbReference>
<dbReference type="GO" id="GO:0009274">
    <property type="term" value="C:peptidoglycan-based cell wall"/>
    <property type="evidence" value="ECO:0000250"/>
    <property type="project" value="UniProtKB"/>
</dbReference>
<dbReference type="GO" id="GO:0003884">
    <property type="term" value="F:D-amino-acid oxidase activity"/>
    <property type="evidence" value="ECO:0000250"/>
    <property type="project" value="UniProtKB"/>
</dbReference>
<dbReference type="GO" id="GO:0071949">
    <property type="term" value="F:FAD binding"/>
    <property type="evidence" value="ECO:0000250"/>
    <property type="project" value="UniProtKB"/>
</dbReference>
<dbReference type="GO" id="GO:0019478">
    <property type="term" value="P:D-amino acid catabolic process"/>
    <property type="evidence" value="ECO:0000250"/>
    <property type="project" value="UniProtKB"/>
</dbReference>
<dbReference type="Gene3D" id="3.30.9.10">
    <property type="entry name" value="D-Amino Acid Oxidase, subunit A, domain 2"/>
    <property type="match status" value="1"/>
</dbReference>
<dbReference type="Gene3D" id="3.40.50.720">
    <property type="entry name" value="NAD(P)-binding Rossmann-like Domain"/>
    <property type="match status" value="1"/>
</dbReference>
<dbReference type="InterPro" id="IPR023209">
    <property type="entry name" value="DAO"/>
</dbReference>
<dbReference type="InterPro" id="IPR006076">
    <property type="entry name" value="FAD-dep_OxRdtase"/>
</dbReference>
<dbReference type="PANTHER" id="PTHR11530">
    <property type="entry name" value="D-AMINO ACID OXIDASE"/>
    <property type="match status" value="1"/>
</dbReference>
<dbReference type="PANTHER" id="PTHR11530:SF11">
    <property type="entry name" value="D-ASPARTATE OXIDASE"/>
    <property type="match status" value="1"/>
</dbReference>
<dbReference type="Pfam" id="PF01266">
    <property type="entry name" value="DAO"/>
    <property type="match status" value="1"/>
</dbReference>
<dbReference type="PIRSF" id="PIRSF000189">
    <property type="entry name" value="D-aa_oxidase"/>
    <property type="match status" value="1"/>
</dbReference>
<dbReference type="SUPFAM" id="SSF54373">
    <property type="entry name" value="FAD-linked reductases, C-terminal domain"/>
    <property type="match status" value="1"/>
</dbReference>
<dbReference type="SUPFAM" id="SSF51971">
    <property type="entry name" value="Nucleotide-binding domain"/>
    <property type="match status" value="1"/>
</dbReference>
<evidence type="ECO:0000250" key="1">
    <source>
        <dbReference type="UniProtKB" id="A5U3S4"/>
    </source>
</evidence>
<evidence type="ECO:0000250" key="2">
    <source>
        <dbReference type="UniProtKB" id="P00371"/>
    </source>
</evidence>
<evidence type="ECO:0000250" key="3">
    <source>
        <dbReference type="UniProtKB" id="P14920"/>
    </source>
</evidence>
<evidence type="ECO:0000250" key="4">
    <source>
        <dbReference type="UniProtKB" id="P80324"/>
    </source>
</evidence>
<evidence type="ECO:0000250" key="5">
    <source>
        <dbReference type="UniProtKB" id="Q1AYM8"/>
    </source>
</evidence>
<evidence type="ECO:0000305" key="6"/>
<gene>
    <name evidence="6" type="primary">dao</name>
    <name type="ordered locus">Rv1905c</name>
</gene>
<sequence>MAIGEQQVIVIGAGVSGLTSAICLAEAGWPVRVWAAALPQQTTSAVAGAVWGPRPKEPVAKVRGWIEQSLHVFRDLAKDPATGVRMTPALSVGDRIETGAMPPGLELIPDVRPADPADVPGGFRAGFHATLPMIDMPQYLDCLTQRLAATGCEIETRPLRSLAEAAEAAPIVINCAGLGARELAGDATVWPRFGQHVVLTNPGLEQLFIERTGGSEWICYFAHPQRVVCGGISIPGRWDPTPEPEITERILQRCRRIQPRLAEAAVIETITGLRPDRPSVRVEAEPIGRALCIHNYGHGGDGVTLSWGCAREVVNLVGGG</sequence>